<feature type="chain" id="PRO_0000018698" description="Macrolide export protein MacA">
    <location>
        <begin position="1"/>
        <end position="371"/>
    </location>
</feature>
<feature type="topological domain" description="Cytoplasmic" evidence="2">
    <location>
        <begin position="1"/>
        <end position="10"/>
    </location>
</feature>
<feature type="transmembrane region" description="Helical" evidence="2">
    <location>
        <begin position="11"/>
        <end position="31"/>
    </location>
</feature>
<feature type="topological domain" description="Periplasmic" evidence="2">
    <location>
        <begin position="32"/>
        <end position="371"/>
    </location>
</feature>
<feature type="coiled-coil region" evidence="2">
    <location>
        <begin position="94"/>
        <end position="127"/>
    </location>
</feature>
<name>MACA_YERPE</name>
<reference key="1">
    <citation type="journal article" date="2001" name="Nature">
        <title>Genome sequence of Yersinia pestis, the causative agent of plague.</title>
        <authorList>
            <person name="Parkhill J."/>
            <person name="Wren B.W."/>
            <person name="Thomson N.R."/>
            <person name="Titball R.W."/>
            <person name="Holden M.T.G."/>
            <person name="Prentice M.B."/>
            <person name="Sebaihia M."/>
            <person name="James K.D."/>
            <person name="Churcher C.M."/>
            <person name="Mungall K.L."/>
            <person name="Baker S."/>
            <person name="Basham D."/>
            <person name="Bentley S.D."/>
            <person name="Brooks K."/>
            <person name="Cerdeno-Tarraga A.-M."/>
            <person name="Chillingworth T."/>
            <person name="Cronin A."/>
            <person name="Davies R.M."/>
            <person name="Davis P."/>
            <person name="Dougan G."/>
            <person name="Feltwell T."/>
            <person name="Hamlin N."/>
            <person name="Holroyd S."/>
            <person name="Jagels K."/>
            <person name="Karlyshev A.V."/>
            <person name="Leather S."/>
            <person name="Moule S."/>
            <person name="Oyston P.C.F."/>
            <person name="Quail M.A."/>
            <person name="Rutherford K.M."/>
            <person name="Simmonds M."/>
            <person name="Skelton J."/>
            <person name="Stevens K."/>
            <person name="Whitehead S."/>
            <person name="Barrell B.G."/>
        </authorList>
    </citation>
    <scope>NUCLEOTIDE SEQUENCE [LARGE SCALE GENOMIC DNA]</scope>
    <source>
        <strain>CO-92 / Biovar Orientalis</strain>
    </source>
</reference>
<reference key="2">
    <citation type="journal article" date="2002" name="J. Bacteriol.">
        <title>Genome sequence of Yersinia pestis KIM.</title>
        <authorList>
            <person name="Deng W."/>
            <person name="Burland V."/>
            <person name="Plunkett G. III"/>
            <person name="Boutin A."/>
            <person name="Mayhew G.F."/>
            <person name="Liss P."/>
            <person name="Perna N.T."/>
            <person name="Rose D.J."/>
            <person name="Mau B."/>
            <person name="Zhou S."/>
            <person name="Schwartz D.C."/>
            <person name="Fetherston J.D."/>
            <person name="Lindler L.E."/>
            <person name="Brubaker R.R."/>
            <person name="Plano G.V."/>
            <person name="Straley S.C."/>
            <person name="McDonough K.A."/>
            <person name="Nilles M.L."/>
            <person name="Matson J.S."/>
            <person name="Blattner F.R."/>
            <person name="Perry R.D."/>
        </authorList>
    </citation>
    <scope>NUCLEOTIDE SEQUENCE [LARGE SCALE GENOMIC DNA]</scope>
    <source>
        <strain>KIM10+ / Biovar Mediaevalis</strain>
    </source>
</reference>
<reference key="3">
    <citation type="journal article" date="2004" name="DNA Res.">
        <title>Complete genome sequence of Yersinia pestis strain 91001, an isolate avirulent to humans.</title>
        <authorList>
            <person name="Song Y."/>
            <person name="Tong Z."/>
            <person name="Wang J."/>
            <person name="Wang L."/>
            <person name="Guo Z."/>
            <person name="Han Y."/>
            <person name="Zhang J."/>
            <person name="Pei D."/>
            <person name="Zhou D."/>
            <person name="Qin H."/>
            <person name="Pang X."/>
            <person name="Han Y."/>
            <person name="Zhai J."/>
            <person name="Li M."/>
            <person name="Cui B."/>
            <person name="Qi Z."/>
            <person name="Jin L."/>
            <person name="Dai R."/>
            <person name="Chen F."/>
            <person name="Li S."/>
            <person name="Ye C."/>
            <person name="Du Z."/>
            <person name="Lin W."/>
            <person name="Wang J."/>
            <person name="Yu J."/>
            <person name="Yang H."/>
            <person name="Wang J."/>
            <person name="Huang P."/>
            <person name="Yang R."/>
        </authorList>
    </citation>
    <scope>NUCLEOTIDE SEQUENCE [LARGE SCALE GENOMIC DNA]</scope>
    <source>
        <strain>91001 / Biovar Mediaevalis</strain>
    </source>
</reference>
<comment type="function">
    <text evidence="1">Part of the tripartite efflux system MacAB-TolC. MacA stimulates the ATPase activity of MacB by promoting the closed ATP-bound state of MacB, increases the capacity of MacB to bind macrolides such as erythromycin, and provides a physical link between MacB and TolC. Confers resistance against macrolides (By similarity).</text>
</comment>
<comment type="subunit">
    <text evidence="1">Homohexamer. Part of the tripartite efflux system MacAB-TolC, which is composed of an inner membrane transporter, MacB, a periplasmic membrane fusion protein, MacA, and an outer membrane component, TolC. The complex forms a large protein conduit and can translocate molecules across both the inner and outer membranes. MacA interacts with MacB and TolC (By similarity).</text>
</comment>
<comment type="subcellular location">
    <subcellularLocation>
        <location evidence="1">Cell inner membrane</location>
        <topology evidence="1">Single-pass membrane protein</topology>
        <orientation evidence="1">Periplasmic side</orientation>
    </subcellularLocation>
</comment>
<comment type="similarity">
    <text evidence="3">Belongs to the membrane fusion protein (MFP) (TC 8.A.1) family.</text>
</comment>
<comment type="sequence caution" evidence="3">
    <conflict type="erroneous initiation">
        <sequence resource="EMBL-CDS" id="AAS61473"/>
    </conflict>
    <text>Truncated N-terminus.</text>
</comment>
<evidence type="ECO:0000250" key="1"/>
<evidence type="ECO:0000255" key="2"/>
<evidence type="ECO:0000305" key="3"/>
<proteinExistence type="inferred from homology"/>
<dbReference type="EMBL" id="AL590842">
    <property type="protein sequence ID" value="CAL20016.1"/>
    <property type="molecule type" value="Genomic_DNA"/>
</dbReference>
<dbReference type="EMBL" id="AE009952">
    <property type="protein sequence ID" value="AAM86365.1"/>
    <property type="molecule type" value="Genomic_DNA"/>
</dbReference>
<dbReference type="EMBL" id="AE017042">
    <property type="protein sequence ID" value="AAS61473.1"/>
    <property type="status" value="ALT_INIT"/>
    <property type="molecule type" value="Genomic_DNA"/>
</dbReference>
<dbReference type="PIR" id="AF0166">
    <property type="entry name" value="AF0166"/>
</dbReference>
<dbReference type="RefSeq" id="YP_002346387.1">
    <property type="nucleotide sequence ID" value="NC_003143.1"/>
</dbReference>
<dbReference type="SMR" id="P58411"/>
<dbReference type="IntAct" id="P58411">
    <property type="interactions" value="2"/>
</dbReference>
<dbReference type="STRING" id="214092.YPO1364"/>
<dbReference type="PaxDb" id="214092-YPO1364"/>
<dbReference type="DNASU" id="1147761"/>
<dbReference type="EnsemblBacteria" id="AAS61473">
    <property type="protein sequence ID" value="AAS61473"/>
    <property type="gene ID" value="YP_1230"/>
</dbReference>
<dbReference type="KEGG" id="ype:YPO1364"/>
<dbReference type="KEGG" id="ypk:y2814"/>
<dbReference type="KEGG" id="ypm:YP_1230"/>
<dbReference type="PATRIC" id="fig|214092.21.peg.1685"/>
<dbReference type="eggNOG" id="COG0845">
    <property type="taxonomic scope" value="Bacteria"/>
</dbReference>
<dbReference type="HOGENOM" id="CLU_018816_14_1_6"/>
<dbReference type="OMA" id="MAYGVFR"/>
<dbReference type="OrthoDB" id="9791520at2"/>
<dbReference type="Proteomes" id="UP000000815">
    <property type="component" value="Chromosome"/>
</dbReference>
<dbReference type="Proteomes" id="UP000001019">
    <property type="component" value="Chromosome"/>
</dbReference>
<dbReference type="Proteomes" id="UP000002490">
    <property type="component" value="Chromosome"/>
</dbReference>
<dbReference type="GO" id="GO:1990281">
    <property type="term" value="C:efflux pump complex"/>
    <property type="evidence" value="ECO:0000318"/>
    <property type="project" value="GO_Central"/>
</dbReference>
<dbReference type="GO" id="GO:0019898">
    <property type="term" value="C:extrinsic component of membrane"/>
    <property type="evidence" value="ECO:0007669"/>
    <property type="project" value="InterPro"/>
</dbReference>
<dbReference type="GO" id="GO:1990195">
    <property type="term" value="C:macrolide transmembrane transporter complex"/>
    <property type="evidence" value="ECO:0007669"/>
    <property type="project" value="InterPro"/>
</dbReference>
<dbReference type="GO" id="GO:0005886">
    <property type="term" value="C:plasma membrane"/>
    <property type="evidence" value="ECO:0007669"/>
    <property type="project" value="UniProtKB-SubCell"/>
</dbReference>
<dbReference type="GO" id="GO:0015562">
    <property type="term" value="F:efflux transmembrane transporter activity"/>
    <property type="evidence" value="ECO:0000318"/>
    <property type="project" value="GO_Central"/>
</dbReference>
<dbReference type="GO" id="GO:0046677">
    <property type="term" value="P:response to antibiotic"/>
    <property type="evidence" value="ECO:0007669"/>
    <property type="project" value="UniProtKB-KW"/>
</dbReference>
<dbReference type="GO" id="GO:1990961">
    <property type="term" value="P:xenobiotic detoxification by transmembrane export across the plasma membrane"/>
    <property type="evidence" value="ECO:0007669"/>
    <property type="project" value="InterPro"/>
</dbReference>
<dbReference type="Gene3D" id="2.40.30.170">
    <property type="match status" value="1"/>
</dbReference>
<dbReference type="Gene3D" id="2.40.420.20">
    <property type="match status" value="1"/>
</dbReference>
<dbReference type="Gene3D" id="2.40.50.100">
    <property type="match status" value="1"/>
</dbReference>
<dbReference type="Gene3D" id="6.10.140.1990">
    <property type="match status" value="1"/>
</dbReference>
<dbReference type="InterPro" id="IPR032317">
    <property type="entry name" value="CusB_D23"/>
</dbReference>
<dbReference type="InterPro" id="IPR030190">
    <property type="entry name" value="MacA_alpha-hairpin_sf"/>
</dbReference>
<dbReference type="InterPro" id="IPR006143">
    <property type="entry name" value="RND_pump_MFP"/>
</dbReference>
<dbReference type="NCBIfam" id="NF008606">
    <property type="entry name" value="PRK11578.1"/>
    <property type="match status" value="1"/>
</dbReference>
<dbReference type="NCBIfam" id="TIGR01730">
    <property type="entry name" value="RND_mfp"/>
    <property type="match status" value="1"/>
</dbReference>
<dbReference type="PANTHER" id="PTHR30469:SF34">
    <property type="entry name" value="MACROLIDE EXPORT PROTEIN MACA"/>
    <property type="match status" value="1"/>
</dbReference>
<dbReference type="PANTHER" id="PTHR30469">
    <property type="entry name" value="MULTIDRUG RESISTANCE PROTEIN MDTA"/>
    <property type="match status" value="1"/>
</dbReference>
<dbReference type="Pfam" id="PF16576">
    <property type="entry name" value="HlyD_D23"/>
    <property type="match status" value="1"/>
</dbReference>
<dbReference type="SUPFAM" id="SSF111369">
    <property type="entry name" value="HlyD-like secretion proteins"/>
    <property type="match status" value="1"/>
</dbReference>
<organism>
    <name type="scientific">Yersinia pestis</name>
    <dbReference type="NCBI Taxonomy" id="632"/>
    <lineage>
        <taxon>Bacteria</taxon>
        <taxon>Pseudomonadati</taxon>
        <taxon>Pseudomonadota</taxon>
        <taxon>Gammaproteobacteria</taxon>
        <taxon>Enterobacterales</taxon>
        <taxon>Yersiniaceae</taxon>
        <taxon>Yersinia</taxon>
    </lineage>
</organism>
<gene>
    <name type="primary">macA</name>
    <name type="ordered locus">YPO1364</name>
    <name type="ordered locus">y2814</name>
    <name type="ordered locus">YP_1230</name>
</gene>
<keyword id="KW-0046">Antibiotic resistance</keyword>
<keyword id="KW-0997">Cell inner membrane</keyword>
<keyword id="KW-1003">Cell membrane</keyword>
<keyword id="KW-0175">Coiled coil</keyword>
<keyword id="KW-0472">Membrane</keyword>
<keyword id="KW-1185">Reference proteome</keyword>
<keyword id="KW-0812">Transmembrane</keyword>
<keyword id="KW-1133">Transmembrane helix</keyword>
<keyword id="KW-0813">Transport</keyword>
<protein>
    <recommendedName>
        <fullName>Macrolide export protein MacA</fullName>
    </recommendedName>
</protein>
<accession>P58411</accession>
<accession>Q0WH51</accession>
<sequence>MMQLSRGQRRWLAAIAVLLIGGFFIARHLMAPVPVNYQTVKVVHRDLQQNVLATGKLDAVRKVDVGAQVSGQLEKLYVEIGDHVKRGQLLAMIDPQQAQNQIKEVEATLQDLNAQRIQAKAELHLATVTLGRQQNLAKLQVVSRQDLDQAVTDLAVKNAKVGTIDAQINKAKASLDTAKINLDYTQISAPMDGDVVQITTLQGQTVIAAQQAPNILTLADMSTMLVQAQVSEADVINLKPGMKASFTVLGDPGKRFSGVLKDILPTPEKVNDAIFYSARFEVPNPDRLLRLQMTAQVSIQLANVDQAVVIPLAALGDELGSNRYQVTVLKEGKEEKREVTIGIRNNVDAQVISGLSVGEDVIVSRGGTGDA</sequence>